<sequence length="145" mass="16330">MDVLVINGPNLNLLGTRQPQFYGHKTLADINNDLLKIAKENNINIDFYQSNHEGQIIDKIQQTAAKIIIINPAAFTHTSVAIRDAFLAINKPFIEIHLSNIYNREEFRTKSFLSDIAYGCIFGFGPNGYTLALIEAINYINMKGE</sequence>
<protein>
    <recommendedName>
        <fullName evidence="1">3-dehydroquinate dehydratase</fullName>
        <shortName evidence="1">3-dehydroquinase</shortName>
        <ecNumber evidence="1">4.2.1.10</ecNumber>
    </recommendedName>
    <alternativeName>
        <fullName evidence="1">Type II DHQase</fullName>
    </alternativeName>
</protein>
<evidence type="ECO:0000255" key="1">
    <source>
        <dbReference type="HAMAP-Rule" id="MF_00169"/>
    </source>
</evidence>
<name>AROQ_FRATO</name>
<keyword id="KW-0028">Amino-acid biosynthesis</keyword>
<keyword id="KW-0057">Aromatic amino acid biosynthesis</keyword>
<keyword id="KW-0456">Lyase</keyword>
<accession>Q0BKP9</accession>
<organism>
    <name type="scientific">Francisella tularensis subsp. holarctica (strain OSU18)</name>
    <dbReference type="NCBI Taxonomy" id="393011"/>
    <lineage>
        <taxon>Bacteria</taxon>
        <taxon>Pseudomonadati</taxon>
        <taxon>Pseudomonadota</taxon>
        <taxon>Gammaproteobacteria</taxon>
        <taxon>Thiotrichales</taxon>
        <taxon>Francisellaceae</taxon>
        <taxon>Francisella</taxon>
    </lineage>
</organism>
<reference key="1">
    <citation type="journal article" date="2006" name="J. Bacteriol.">
        <title>Chromosome rearrangement and diversification of Francisella tularensis revealed by the type B (OSU18) genome sequence.</title>
        <authorList>
            <person name="Petrosino J.F."/>
            <person name="Xiang Q."/>
            <person name="Karpathy S.E."/>
            <person name="Jiang H."/>
            <person name="Yerrapragada S."/>
            <person name="Liu Y."/>
            <person name="Gioia J."/>
            <person name="Hemphill L."/>
            <person name="Gonzalez A."/>
            <person name="Raghavan T.M."/>
            <person name="Uzman A."/>
            <person name="Fox G.E."/>
            <person name="Highlander S."/>
            <person name="Reichard M."/>
            <person name="Morton R.J."/>
            <person name="Clinkenbeard K.D."/>
            <person name="Weinstock G.M."/>
        </authorList>
    </citation>
    <scope>NUCLEOTIDE SEQUENCE [LARGE SCALE GENOMIC DNA]</scope>
    <source>
        <strain>OSU18</strain>
    </source>
</reference>
<proteinExistence type="inferred from homology"/>
<dbReference type="EC" id="4.2.1.10" evidence="1"/>
<dbReference type="EMBL" id="CP000437">
    <property type="protein sequence ID" value="ABI83335.1"/>
    <property type="molecule type" value="Genomic_DNA"/>
</dbReference>
<dbReference type="RefSeq" id="WP_003016972.1">
    <property type="nucleotide sequence ID" value="NC_017463.1"/>
</dbReference>
<dbReference type="SMR" id="Q0BKP9"/>
<dbReference type="GeneID" id="75263952"/>
<dbReference type="KEGG" id="fth:FTH_1539"/>
<dbReference type="UniPathway" id="UPA00053">
    <property type="reaction ID" value="UER00086"/>
</dbReference>
<dbReference type="GO" id="GO:0003855">
    <property type="term" value="F:3-dehydroquinate dehydratase activity"/>
    <property type="evidence" value="ECO:0007669"/>
    <property type="project" value="UniProtKB-UniRule"/>
</dbReference>
<dbReference type="GO" id="GO:0008652">
    <property type="term" value="P:amino acid biosynthetic process"/>
    <property type="evidence" value="ECO:0007669"/>
    <property type="project" value="UniProtKB-KW"/>
</dbReference>
<dbReference type="GO" id="GO:0009073">
    <property type="term" value="P:aromatic amino acid family biosynthetic process"/>
    <property type="evidence" value="ECO:0007669"/>
    <property type="project" value="UniProtKB-KW"/>
</dbReference>
<dbReference type="GO" id="GO:0009423">
    <property type="term" value="P:chorismate biosynthetic process"/>
    <property type="evidence" value="ECO:0007669"/>
    <property type="project" value="UniProtKB-UniRule"/>
</dbReference>
<dbReference type="GO" id="GO:0019631">
    <property type="term" value="P:quinate catabolic process"/>
    <property type="evidence" value="ECO:0007669"/>
    <property type="project" value="TreeGrafter"/>
</dbReference>
<dbReference type="CDD" id="cd00466">
    <property type="entry name" value="DHQase_II"/>
    <property type="match status" value="1"/>
</dbReference>
<dbReference type="Gene3D" id="3.40.50.9100">
    <property type="entry name" value="Dehydroquinase, class II"/>
    <property type="match status" value="1"/>
</dbReference>
<dbReference type="HAMAP" id="MF_00169">
    <property type="entry name" value="AroQ"/>
    <property type="match status" value="1"/>
</dbReference>
<dbReference type="InterPro" id="IPR001874">
    <property type="entry name" value="DHquinase_II"/>
</dbReference>
<dbReference type="InterPro" id="IPR018509">
    <property type="entry name" value="DHquinase_II_CS"/>
</dbReference>
<dbReference type="InterPro" id="IPR036441">
    <property type="entry name" value="DHquinase_II_sf"/>
</dbReference>
<dbReference type="NCBIfam" id="TIGR01088">
    <property type="entry name" value="aroQ"/>
    <property type="match status" value="1"/>
</dbReference>
<dbReference type="NCBIfam" id="NF003804">
    <property type="entry name" value="PRK05395.1-1"/>
    <property type="match status" value="1"/>
</dbReference>
<dbReference type="NCBIfam" id="NF003805">
    <property type="entry name" value="PRK05395.1-2"/>
    <property type="match status" value="1"/>
</dbReference>
<dbReference type="NCBIfam" id="NF003806">
    <property type="entry name" value="PRK05395.1-3"/>
    <property type="match status" value="1"/>
</dbReference>
<dbReference type="NCBIfam" id="NF003807">
    <property type="entry name" value="PRK05395.1-4"/>
    <property type="match status" value="1"/>
</dbReference>
<dbReference type="PANTHER" id="PTHR21272">
    <property type="entry name" value="CATABOLIC 3-DEHYDROQUINASE"/>
    <property type="match status" value="1"/>
</dbReference>
<dbReference type="PANTHER" id="PTHR21272:SF3">
    <property type="entry name" value="CATABOLIC 3-DEHYDROQUINASE"/>
    <property type="match status" value="1"/>
</dbReference>
<dbReference type="Pfam" id="PF01220">
    <property type="entry name" value="DHquinase_II"/>
    <property type="match status" value="1"/>
</dbReference>
<dbReference type="PIRSF" id="PIRSF001399">
    <property type="entry name" value="DHquinase_II"/>
    <property type="match status" value="1"/>
</dbReference>
<dbReference type="SUPFAM" id="SSF52304">
    <property type="entry name" value="Type II 3-dehydroquinate dehydratase"/>
    <property type="match status" value="1"/>
</dbReference>
<dbReference type="PROSITE" id="PS01029">
    <property type="entry name" value="DEHYDROQUINASE_II"/>
    <property type="match status" value="1"/>
</dbReference>
<feature type="chain" id="PRO_1000077039" description="3-dehydroquinate dehydratase">
    <location>
        <begin position="1"/>
        <end position="145"/>
    </location>
</feature>
<feature type="active site" description="Proton acceptor" evidence="1">
    <location>
        <position position="22"/>
    </location>
</feature>
<feature type="active site" description="Proton donor" evidence="1">
    <location>
        <position position="97"/>
    </location>
</feature>
<feature type="binding site" evidence="1">
    <location>
        <position position="71"/>
    </location>
    <ligand>
        <name>substrate</name>
    </ligand>
</feature>
<feature type="binding site" evidence="1">
    <location>
        <position position="77"/>
    </location>
    <ligand>
        <name>substrate</name>
    </ligand>
</feature>
<feature type="binding site" evidence="1">
    <location>
        <position position="84"/>
    </location>
    <ligand>
        <name>substrate</name>
    </ligand>
</feature>
<feature type="binding site" evidence="1">
    <location>
        <begin position="98"/>
        <end position="99"/>
    </location>
    <ligand>
        <name>substrate</name>
    </ligand>
</feature>
<feature type="binding site" evidence="1">
    <location>
        <position position="108"/>
    </location>
    <ligand>
        <name>substrate</name>
    </ligand>
</feature>
<feature type="site" description="Transition state stabilizer" evidence="1">
    <location>
        <position position="17"/>
    </location>
</feature>
<comment type="function">
    <text evidence="1">Catalyzes a trans-dehydration via an enolate intermediate.</text>
</comment>
<comment type="catalytic activity">
    <reaction evidence="1">
        <text>3-dehydroquinate = 3-dehydroshikimate + H2O</text>
        <dbReference type="Rhea" id="RHEA:21096"/>
        <dbReference type="ChEBI" id="CHEBI:15377"/>
        <dbReference type="ChEBI" id="CHEBI:16630"/>
        <dbReference type="ChEBI" id="CHEBI:32364"/>
        <dbReference type="EC" id="4.2.1.10"/>
    </reaction>
</comment>
<comment type="pathway">
    <text evidence="1">Metabolic intermediate biosynthesis; chorismate biosynthesis; chorismate from D-erythrose 4-phosphate and phosphoenolpyruvate: step 3/7.</text>
</comment>
<comment type="subunit">
    <text evidence="1">Homododecamer.</text>
</comment>
<comment type="similarity">
    <text evidence="1">Belongs to the type-II 3-dehydroquinase family.</text>
</comment>
<gene>
    <name evidence="1" type="primary">aroQ</name>
    <name type="ordered locus">FTH_1539</name>
</gene>